<protein>
    <recommendedName>
        <fullName evidence="1">Thymidylate kinase</fullName>
        <ecNumber evidence="1">2.7.4.9</ecNumber>
    </recommendedName>
    <alternativeName>
        <fullName evidence="1">dTMP kinase</fullName>
    </alternativeName>
</protein>
<comment type="function">
    <text evidence="1">Phosphorylation of dTMP to form dTDP in both de novo and salvage pathways of dTTP synthesis.</text>
</comment>
<comment type="catalytic activity">
    <reaction evidence="1">
        <text>dTMP + ATP = dTDP + ADP</text>
        <dbReference type="Rhea" id="RHEA:13517"/>
        <dbReference type="ChEBI" id="CHEBI:30616"/>
        <dbReference type="ChEBI" id="CHEBI:58369"/>
        <dbReference type="ChEBI" id="CHEBI:63528"/>
        <dbReference type="ChEBI" id="CHEBI:456216"/>
        <dbReference type="EC" id="2.7.4.9"/>
    </reaction>
</comment>
<comment type="similarity">
    <text evidence="1">Belongs to the thymidylate kinase family.</text>
</comment>
<keyword id="KW-0067">ATP-binding</keyword>
<keyword id="KW-0418">Kinase</keyword>
<keyword id="KW-0545">Nucleotide biosynthesis</keyword>
<keyword id="KW-0547">Nucleotide-binding</keyword>
<keyword id="KW-0808">Transferase</keyword>
<sequence length="214" mass="23155">MSGLFITFEGGEGAGKSTQIALLASHLRNHGFDPVITREPGGSPGAEAIRHVILSGNAETYGPAMEALLFAAARADHVDQLIRPALAEGRIVLCDRFIDSSRAYQGVTGNLDATYMAAIERIAIDGAMPDLTLVLDICAERGLSRAGKRRGSDTADRFEKEDIAVHEARRQAFLEIARQEPARCKLIDADRSQEKIADEIRSVVDTILTEKGLL</sequence>
<accession>B0CGE4</accession>
<evidence type="ECO:0000255" key="1">
    <source>
        <dbReference type="HAMAP-Rule" id="MF_00165"/>
    </source>
</evidence>
<dbReference type="EC" id="2.7.4.9" evidence="1"/>
<dbReference type="EMBL" id="CP000911">
    <property type="protein sequence ID" value="ABY38095.1"/>
    <property type="molecule type" value="Genomic_DNA"/>
</dbReference>
<dbReference type="RefSeq" id="WP_006072714.1">
    <property type="nucleotide sequence ID" value="NC_010169.1"/>
</dbReference>
<dbReference type="SMR" id="B0CGE4"/>
<dbReference type="KEGG" id="bmt:BSUIS_A1036"/>
<dbReference type="HOGENOM" id="CLU_049131_0_0_5"/>
<dbReference type="Proteomes" id="UP000008545">
    <property type="component" value="Chromosome I"/>
</dbReference>
<dbReference type="GO" id="GO:0005829">
    <property type="term" value="C:cytosol"/>
    <property type="evidence" value="ECO:0007669"/>
    <property type="project" value="TreeGrafter"/>
</dbReference>
<dbReference type="GO" id="GO:0005524">
    <property type="term" value="F:ATP binding"/>
    <property type="evidence" value="ECO:0007669"/>
    <property type="project" value="UniProtKB-UniRule"/>
</dbReference>
<dbReference type="GO" id="GO:0004798">
    <property type="term" value="F:dTMP kinase activity"/>
    <property type="evidence" value="ECO:0007669"/>
    <property type="project" value="UniProtKB-UniRule"/>
</dbReference>
<dbReference type="GO" id="GO:0006233">
    <property type="term" value="P:dTDP biosynthetic process"/>
    <property type="evidence" value="ECO:0007669"/>
    <property type="project" value="InterPro"/>
</dbReference>
<dbReference type="GO" id="GO:0006235">
    <property type="term" value="P:dTTP biosynthetic process"/>
    <property type="evidence" value="ECO:0007669"/>
    <property type="project" value="UniProtKB-UniRule"/>
</dbReference>
<dbReference type="GO" id="GO:0006227">
    <property type="term" value="P:dUDP biosynthetic process"/>
    <property type="evidence" value="ECO:0007669"/>
    <property type="project" value="TreeGrafter"/>
</dbReference>
<dbReference type="CDD" id="cd01672">
    <property type="entry name" value="TMPK"/>
    <property type="match status" value="1"/>
</dbReference>
<dbReference type="FunFam" id="3.40.50.300:FF:000225">
    <property type="entry name" value="Thymidylate kinase"/>
    <property type="match status" value="1"/>
</dbReference>
<dbReference type="Gene3D" id="3.40.50.300">
    <property type="entry name" value="P-loop containing nucleotide triphosphate hydrolases"/>
    <property type="match status" value="1"/>
</dbReference>
<dbReference type="HAMAP" id="MF_00165">
    <property type="entry name" value="Thymidylate_kinase"/>
    <property type="match status" value="1"/>
</dbReference>
<dbReference type="InterPro" id="IPR027417">
    <property type="entry name" value="P-loop_NTPase"/>
</dbReference>
<dbReference type="InterPro" id="IPR039430">
    <property type="entry name" value="Thymidylate_kin-like_dom"/>
</dbReference>
<dbReference type="InterPro" id="IPR018095">
    <property type="entry name" value="Thymidylate_kin_CS"/>
</dbReference>
<dbReference type="InterPro" id="IPR018094">
    <property type="entry name" value="Thymidylate_kinase"/>
</dbReference>
<dbReference type="NCBIfam" id="TIGR00041">
    <property type="entry name" value="DTMP_kinase"/>
    <property type="match status" value="1"/>
</dbReference>
<dbReference type="PANTHER" id="PTHR10344">
    <property type="entry name" value="THYMIDYLATE KINASE"/>
    <property type="match status" value="1"/>
</dbReference>
<dbReference type="PANTHER" id="PTHR10344:SF4">
    <property type="entry name" value="UMP-CMP KINASE 2, MITOCHONDRIAL"/>
    <property type="match status" value="1"/>
</dbReference>
<dbReference type="Pfam" id="PF02223">
    <property type="entry name" value="Thymidylate_kin"/>
    <property type="match status" value="1"/>
</dbReference>
<dbReference type="SUPFAM" id="SSF52540">
    <property type="entry name" value="P-loop containing nucleoside triphosphate hydrolases"/>
    <property type="match status" value="1"/>
</dbReference>
<dbReference type="PROSITE" id="PS01331">
    <property type="entry name" value="THYMIDYLATE_KINASE"/>
    <property type="match status" value="1"/>
</dbReference>
<name>KTHY_BRUSI</name>
<gene>
    <name evidence="1" type="primary">tmk</name>
    <name type="ordered locus">BSUIS_A1036</name>
</gene>
<proteinExistence type="inferred from homology"/>
<feature type="chain" id="PRO_1000076959" description="Thymidylate kinase">
    <location>
        <begin position="1"/>
        <end position="214"/>
    </location>
</feature>
<feature type="binding site" evidence="1">
    <location>
        <begin position="10"/>
        <end position="17"/>
    </location>
    <ligand>
        <name>ATP</name>
        <dbReference type="ChEBI" id="CHEBI:30616"/>
    </ligand>
</feature>
<reference key="1">
    <citation type="submission" date="2007-12" db="EMBL/GenBank/DDBJ databases">
        <title>Brucella suis ATCC 23445 whole genome shotgun sequencing project.</title>
        <authorList>
            <person name="Setubal J.C."/>
            <person name="Bowns C."/>
            <person name="Boyle S."/>
            <person name="Crasta O.R."/>
            <person name="Czar M.J."/>
            <person name="Dharmanolla C."/>
            <person name="Gillespie J.J."/>
            <person name="Kenyon R.W."/>
            <person name="Lu J."/>
            <person name="Mane S."/>
            <person name="Mohapatra S."/>
            <person name="Nagrani S."/>
            <person name="Purkayastha A."/>
            <person name="Rajasimha H.K."/>
            <person name="Shallom J.M."/>
            <person name="Shallom S."/>
            <person name="Shukla M."/>
            <person name="Snyder E.E."/>
            <person name="Sobral B.W."/>
            <person name="Wattam A.R."/>
            <person name="Will R."/>
            <person name="Williams K."/>
            <person name="Yoo H."/>
            <person name="Bruce D."/>
            <person name="Detter C."/>
            <person name="Munk C."/>
            <person name="Brettin T.S."/>
        </authorList>
    </citation>
    <scope>NUCLEOTIDE SEQUENCE [LARGE SCALE GENOMIC DNA]</scope>
    <source>
        <strain>ATCC 23445 / NCTC 10510</strain>
    </source>
</reference>
<organism>
    <name type="scientific">Brucella suis (strain ATCC 23445 / NCTC 10510)</name>
    <dbReference type="NCBI Taxonomy" id="470137"/>
    <lineage>
        <taxon>Bacteria</taxon>
        <taxon>Pseudomonadati</taxon>
        <taxon>Pseudomonadota</taxon>
        <taxon>Alphaproteobacteria</taxon>
        <taxon>Hyphomicrobiales</taxon>
        <taxon>Brucellaceae</taxon>
        <taxon>Brucella/Ochrobactrum group</taxon>
        <taxon>Brucella</taxon>
    </lineage>
</organism>